<feature type="chain" id="PRO_0000327051" description="Protoheme IX farnesyltransferase">
    <location>
        <begin position="1"/>
        <end position="295"/>
    </location>
</feature>
<feature type="transmembrane region" description="Helical" evidence="1">
    <location>
        <begin position="30"/>
        <end position="50"/>
    </location>
</feature>
<feature type="transmembrane region" description="Helical" evidence="1">
    <location>
        <begin position="51"/>
        <end position="71"/>
    </location>
</feature>
<feature type="transmembrane region" description="Helical" evidence="1">
    <location>
        <begin position="93"/>
        <end position="115"/>
    </location>
</feature>
<feature type="transmembrane region" description="Helical" evidence="1">
    <location>
        <begin position="119"/>
        <end position="136"/>
    </location>
</feature>
<feature type="transmembrane region" description="Helical" evidence="1">
    <location>
        <begin position="148"/>
        <end position="168"/>
    </location>
</feature>
<feature type="transmembrane region" description="Helical" evidence="1">
    <location>
        <begin position="175"/>
        <end position="195"/>
    </location>
</feature>
<feature type="transmembrane region" description="Helical" evidence="1">
    <location>
        <begin position="219"/>
        <end position="239"/>
    </location>
</feature>
<feature type="transmembrane region" description="Helical" evidence="1">
    <location>
        <begin position="244"/>
        <end position="264"/>
    </location>
</feature>
<feature type="transmembrane region" description="Helical" evidence="1">
    <location>
        <begin position="275"/>
        <end position="295"/>
    </location>
</feature>
<proteinExistence type="inferred from homology"/>
<sequence length="295" mass="32820">MGIQSSTMKLPLIHEISDYWHLLKPKIMYLVVLTGVTGIIIAPGNIHPLIAVISTLCIALGSGAAGAINMWYDSDIDALMTRTKTRPIPAGKISRSSALEVGLVLSFISVTIMMIAVNYISGILLAISIGFYIYVYTMYLKRRTPQNIVIGGAAGALPPIIGWTSVTGSISIESLVLFLIIFMWTPPHFWALSLLNYHEYEKAKIPMLPVTHGIFTTKIHILVYSILLFPITLLPGLFLKDPVLYEITAIPLGLMFVVQAFQVFKSSISYHYRVMFTYSIIYLFILFTCIMLSSF</sequence>
<evidence type="ECO:0000255" key="1">
    <source>
        <dbReference type="HAMAP-Rule" id="MF_00154"/>
    </source>
</evidence>
<protein>
    <recommendedName>
        <fullName evidence="1">Protoheme IX farnesyltransferase</fullName>
        <ecNumber evidence="1">2.5.1.141</ecNumber>
    </recommendedName>
    <alternativeName>
        <fullName evidence="1">Heme B farnesyltransferase</fullName>
    </alternativeName>
    <alternativeName>
        <fullName evidence="1">Heme O synthase</fullName>
    </alternativeName>
</protein>
<name>COXX_EHRRW</name>
<organism>
    <name type="scientific">Ehrlichia ruminantium (strain Welgevonden)</name>
    <dbReference type="NCBI Taxonomy" id="254945"/>
    <lineage>
        <taxon>Bacteria</taxon>
        <taxon>Pseudomonadati</taxon>
        <taxon>Pseudomonadota</taxon>
        <taxon>Alphaproteobacteria</taxon>
        <taxon>Rickettsiales</taxon>
        <taxon>Anaplasmataceae</taxon>
        <taxon>Ehrlichia</taxon>
    </lineage>
</organism>
<dbReference type="EC" id="2.5.1.141" evidence="1"/>
<dbReference type="EMBL" id="CR767821">
    <property type="protein sequence ID" value="CAH58509.1"/>
    <property type="molecule type" value="Genomic_DNA"/>
</dbReference>
<dbReference type="EMBL" id="CR925678">
    <property type="protein sequence ID" value="CAI27313.1"/>
    <property type="molecule type" value="Genomic_DNA"/>
</dbReference>
<dbReference type="RefSeq" id="WP_011155454.1">
    <property type="nucleotide sequence ID" value="NC_005295.2"/>
</dbReference>
<dbReference type="SMR" id="Q5HAA6"/>
<dbReference type="GeneID" id="33058174"/>
<dbReference type="KEGG" id="eru:Erum7750"/>
<dbReference type="KEGG" id="erw:ERWE_CDS_08190"/>
<dbReference type="eggNOG" id="COG0109">
    <property type="taxonomic scope" value="Bacteria"/>
</dbReference>
<dbReference type="HOGENOM" id="CLU_029631_0_2_5"/>
<dbReference type="UniPathway" id="UPA00834">
    <property type="reaction ID" value="UER00712"/>
</dbReference>
<dbReference type="Proteomes" id="UP000001021">
    <property type="component" value="Chromosome"/>
</dbReference>
<dbReference type="GO" id="GO:0005886">
    <property type="term" value="C:plasma membrane"/>
    <property type="evidence" value="ECO:0007669"/>
    <property type="project" value="UniProtKB-SubCell"/>
</dbReference>
<dbReference type="GO" id="GO:0008495">
    <property type="term" value="F:protoheme IX farnesyltransferase activity"/>
    <property type="evidence" value="ECO:0007669"/>
    <property type="project" value="UniProtKB-UniRule"/>
</dbReference>
<dbReference type="GO" id="GO:0048034">
    <property type="term" value="P:heme O biosynthetic process"/>
    <property type="evidence" value="ECO:0007669"/>
    <property type="project" value="UniProtKB-UniRule"/>
</dbReference>
<dbReference type="CDD" id="cd13957">
    <property type="entry name" value="PT_UbiA_Cox10"/>
    <property type="match status" value="1"/>
</dbReference>
<dbReference type="Gene3D" id="1.10.357.140">
    <property type="entry name" value="UbiA prenyltransferase"/>
    <property type="match status" value="1"/>
</dbReference>
<dbReference type="HAMAP" id="MF_00154">
    <property type="entry name" value="CyoE_CtaB"/>
    <property type="match status" value="1"/>
</dbReference>
<dbReference type="InterPro" id="IPR006369">
    <property type="entry name" value="Protohaem_IX_farnesylTrfase"/>
</dbReference>
<dbReference type="InterPro" id="IPR000537">
    <property type="entry name" value="UbiA_prenyltransferase"/>
</dbReference>
<dbReference type="InterPro" id="IPR030470">
    <property type="entry name" value="UbiA_prenylTrfase_CS"/>
</dbReference>
<dbReference type="InterPro" id="IPR044878">
    <property type="entry name" value="UbiA_sf"/>
</dbReference>
<dbReference type="NCBIfam" id="TIGR01473">
    <property type="entry name" value="cyoE_ctaB"/>
    <property type="match status" value="1"/>
</dbReference>
<dbReference type="NCBIfam" id="NF003349">
    <property type="entry name" value="PRK04375.1-2"/>
    <property type="match status" value="1"/>
</dbReference>
<dbReference type="PANTHER" id="PTHR43448:SF7">
    <property type="entry name" value="4-HYDROXYBENZOATE SOLANESYLTRANSFERASE"/>
    <property type="match status" value="1"/>
</dbReference>
<dbReference type="PANTHER" id="PTHR43448">
    <property type="entry name" value="PROTOHEME IX FARNESYLTRANSFERASE, MITOCHONDRIAL"/>
    <property type="match status" value="1"/>
</dbReference>
<dbReference type="Pfam" id="PF01040">
    <property type="entry name" value="UbiA"/>
    <property type="match status" value="1"/>
</dbReference>
<dbReference type="PROSITE" id="PS00943">
    <property type="entry name" value="UBIA"/>
    <property type="match status" value="1"/>
</dbReference>
<keyword id="KW-0997">Cell inner membrane</keyword>
<keyword id="KW-1003">Cell membrane</keyword>
<keyword id="KW-0350">Heme biosynthesis</keyword>
<keyword id="KW-0472">Membrane</keyword>
<keyword id="KW-0808">Transferase</keyword>
<keyword id="KW-0812">Transmembrane</keyword>
<keyword id="KW-1133">Transmembrane helix</keyword>
<accession>Q5HAA6</accession>
<accession>Q5FDR0</accession>
<gene>
    <name evidence="1" type="primary">ctaB</name>
    <name type="ordered locus">Erum7750</name>
    <name type="ordered locus">ERWE_CDS_08190</name>
</gene>
<comment type="function">
    <text evidence="1">Converts heme B (protoheme IX) to heme O by substitution of the vinyl group on carbon 2 of heme B porphyrin ring with a hydroxyethyl farnesyl side group.</text>
</comment>
<comment type="catalytic activity">
    <reaction evidence="1">
        <text>heme b + (2E,6E)-farnesyl diphosphate + H2O = Fe(II)-heme o + diphosphate</text>
        <dbReference type="Rhea" id="RHEA:28070"/>
        <dbReference type="ChEBI" id="CHEBI:15377"/>
        <dbReference type="ChEBI" id="CHEBI:33019"/>
        <dbReference type="ChEBI" id="CHEBI:60344"/>
        <dbReference type="ChEBI" id="CHEBI:60530"/>
        <dbReference type="ChEBI" id="CHEBI:175763"/>
        <dbReference type="EC" id="2.5.1.141"/>
    </reaction>
</comment>
<comment type="pathway">
    <text evidence="1">Porphyrin-containing compound metabolism; heme O biosynthesis; heme O from protoheme: step 1/1.</text>
</comment>
<comment type="subcellular location">
    <subcellularLocation>
        <location evidence="1">Cell inner membrane</location>
        <topology evidence="1">Multi-pass membrane protein</topology>
    </subcellularLocation>
</comment>
<comment type="miscellaneous">
    <text evidence="1">Carbon 2 of the heme B porphyrin ring is defined according to the Fischer nomenclature.</text>
</comment>
<comment type="similarity">
    <text evidence="1">Belongs to the UbiA prenyltransferase family. Protoheme IX farnesyltransferase subfamily.</text>
</comment>
<reference key="1">
    <citation type="journal article" date="2005" name="Proc. Natl. Acad. Sci. U.S.A.">
        <title>The genome of the heartwater agent Ehrlichia ruminantium contains multiple tandem repeats of actively variable copy number.</title>
        <authorList>
            <person name="Collins N.E."/>
            <person name="Liebenberg J."/>
            <person name="de Villiers E.P."/>
            <person name="Brayton K.A."/>
            <person name="Louw E."/>
            <person name="Pretorius A."/>
            <person name="Faber F.E."/>
            <person name="van Heerden H."/>
            <person name="Josemans A."/>
            <person name="van Kleef M."/>
            <person name="Steyn H.C."/>
            <person name="van Strijp M.F."/>
            <person name="Zweygarth E."/>
            <person name="Jongejan F."/>
            <person name="Maillard J.C."/>
            <person name="Berthier D."/>
            <person name="Botha M."/>
            <person name="Joubert F."/>
            <person name="Corton C.H."/>
            <person name="Thomson N.R."/>
            <person name="Allsopp M.T."/>
            <person name="Allsopp B.A."/>
        </authorList>
    </citation>
    <scope>NUCLEOTIDE SEQUENCE [LARGE SCALE GENOMIC DNA]</scope>
    <source>
        <strain>Welgevonden</strain>
    </source>
</reference>
<reference key="2">
    <citation type="journal article" date="2006" name="J. Bacteriol.">
        <title>Comparative genomic analysis of three strains of Ehrlichia ruminantium reveals an active process of genome size plasticity.</title>
        <authorList>
            <person name="Frutos R."/>
            <person name="Viari A."/>
            <person name="Ferraz C."/>
            <person name="Morgat A."/>
            <person name="Eychenie S."/>
            <person name="Kandassamy Y."/>
            <person name="Chantal I."/>
            <person name="Bensaid A."/>
            <person name="Coissac E."/>
            <person name="Vachiery N."/>
            <person name="Demaille J."/>
            <person name="Martinez D."/>
        </authorList>
    </citation>
    <scope>NUCLEOTIDE SEQUENCE [LARGE SCALE GENOMIC DNA]</scope>
    <source>
        <strain>Welgevonden</strain>
    </source>
</reference>